<protein>
    <recommendedName>
        <fullName evidence="11">AN1-type zinc finger protein 2B</fullName>
    </recommendedName>
    <alternativeName>
        <fullName evidence="11">Arsenite-inducible RNA-associated protein-like protein</fullName>
        <shortName evidence="11">AIRAP-like protein</shortName>
    </alternativeName>
</protein>
<comment type="function">
    <text evidence="1 8">Plays a role in protein homeostasis by regulating both the translocation and the ubiquitin-mediated proteasomal degradation of nascent proteins at the endoplasmic reticulum. It is involved in the regulation of signal-mediated translocation of proteins into the endoplasmic reticulum. It also plays a role in the ubiquitin-mediated proteasomal degradation of proteins for which signal-mediated translocation to the endoplasmic reticulum has failed. May therefore function in the endoplasmic reticulum stress-induced pre-emptive quality control, a mechanism that selectively attenuates the translocation of newly synthesized proteins into the endoplasmic reticulum and reroutes them to the cytosol for proteasomal degradation (By similarity). By controlling the steady-state expression of the IGF1R receptor, indirectly regulates the insulin-like growth factor receptor signaling pathway (PubMed:26692333).</text>
</comment>
<comment type="subunit">
    <text evidence="1 5 6 7 8">Binds 'Lys-48'-linked polyubiquitin chains of ubiquitinated proteins (PubMed:24160817). Associates with the proteasome complex; upon exposure to arsenite (By similarity). Interacts (via VIM motif) with VCP; the interaction is direct (PubMed:21896481, PubMed:24160817, PubMed:26337389). Interacts with BAG6 (PubMed:24160817, PubMed:26337389). Interacts with IGF1R (nascent precursor form) (PubMed:26692333). Interacts with DERL1, FAF2, NPLOC4 and UFD1; probably through VCP (PubMed:24160817).</text>
</comment>
<comment type="interaction">
    <interactant intactId="EBI-747823">
        <id>Q8WV99</id>
    </interactant>
    <interactant intactId="EBI-12104328">
        <id>Q9H672-2</id>
        <label>ASB7</label>
    </interactant>
    <organismsDiffer>false</organismsDiffer>
    <experiments>3</experiments>
</comment>
<comment type="interaction">
    <interactant intactId="EBI-747823">
        <id>Q8WV99</id>
    </interactant>
    <interactant intactId="EBI-724310">
        <id>Q15038</id>
        <label>DAZAP2</label>
    </interactant>
    <organismsDiffer>false</organismsDiffer>
    <experiments>10</experiments>
</comment>
<comment type="interaction">
    <interactant intactId="EBI-747823">
        <id>Q8WV99</id>
    </interactant>
    <interactant intactId="EBI-10177881">
        <id>G3V162</id>
        <label>TARDBP</label>
    </interactant>
    <organismsDiffer>false</organismsDiffer>
    <experiments>3</experiments>
</comment>
<comment type="interaction">
    <interactant intactId="EBI-747823">
        <id>Q8WV99</id>
    </interactant>
    <interactant intactId="EBI-10173939">
        <id>Q9UMX0-2</id>
        <label>UBQLN1</label>
    </interactant>
    <organismsDiffer>false</organismsDiffer>
    <experiments>3</experiments>
</comment>
<comment type="interaction">
    <interactant intactId="EBI-747823">
        <id>Q8WV99</id>
    </interactant>
    <interactant intactId="EBI-947187">
        <id>Q9UHD9</id>
        <label>UBQLN2</label>
    </interactant>
    <organismsDiffer>false</organismsDiffer>
    <experiments>3</experiments>
</comment>
<comment type="subcellular location">
    <subcellularLocation>
        <location evidence="1">Endoplasmic reticulum membrane</location>
        <topology evidence="1">Lipid-anchor</topology>
    </subcellularLocation>
</comment>
<comment type="alternative products">
    <event type="alternative splicing"/>
    <isoform>
        <id>Q8WV99-1</id>
        <name>1</name>
        <sequence type="displayed"/>
    </isoform>
    <isoform>
        <id>Q8WV99-2</id>
        <name>2</name>
        <sequence type="described" ref="VSP_018001"/>
    </isoform>
</comment>
<comment type="induction">
    <text evidence="8">Down-regulated by the miRNA miR-125a-3p in myelo-proliferative neoplasms.</text>
</comment>
<comment type="domain">
    <text evidence="1">The UIM domains specifically bind 'Lys-48'-linked ubiquitin polymers. The UIM domains mediate interaction with polyubiquitinated proteins.</text>
</comment>
<comment type="PTM">
    <text evidence="1">Phosphorylated by MAPK14. Phosphorylation has no effect on association with the proteasome complex.</text>
</comment>
<feature type="chain" id="PRO_0000232876" description="AN1-type zinc finger protein 2B">
    <location>
        <begin position="1"/>
        <end position="254"/>
    </location>
</feature>
<feature type="propeptide" id="PRO_0000444335" description="Removed in mature form" evidence="1">
    <location>
        <begin position="255"/>
        <end position="257"/>
    </location>
</feature>
<feature type="domain" description="UIM 1" evidence="2">
    <location>
        <begin position="197"/>
        <end position="216"/>
    </location>
</feature>
<feature type="domain" description="UIM 2" evidence="2">
    <location>
        <begin position="221"/>
        <end position="240"/>
    </location>
</feature>
<feature type="zinc finger region" description="AN1-type 1" evidence="3">
    <location>
        <begin position="4"/>
        <end position="52"/>
    </location>
</feature>
<feature type="zinc finger region" description="AN1-type 2" evidence="3">
    <location>
        <begin position="94"/>
        <end position="142"/>
    </location>
</feature>
<feature type="region of interest" description="VCP/p97-interacting motif (VIM)" evidence="5">
    <location>
        <begin position="141"/>
        <end position="151"/>
    </location>
</feature>
<feature type="region of interest" description="Disordered" evidence="4">
    <location>
        <begin position="153"/>
        <end position="187"/>
    </location>
</feature>
<feature type="short sequence motif" description="CAAX motif" evidence="1">
    <location>
        <begin position="254"/>
        <end position="257"/>
    </location>
</feature>
<feature type="compositionally biased region" description="Polar residues" evidence="4">
    <location>
        <begin position="155"/>
        <end position="171"/>
    </location>
</feature>
<feature type="compositionally biased region" description="Low complexity" evidence="4">
    <location>
        <begin position="172"/>
        <end position="186"/>
    </location>
</feature>
<feature type="binding site" evidence="3">
    <location>
        <position position="10"/>
    </location>
    <ligand>
        <name>Zn(2+)</name>
        <dbReference type="ChEBI" id="CHEBI:29105"/>
        <label>1</label>
    </ligand>
</feature>
<feature type="binding site" evidence="3">
    <location>
        <position position="15"/>
    </location>
    <ligand>
        <name>Zn(2+)</name>
        <dbReference type="ChEBI" id="CHEBI:29105"/>
        <label>1</label>
    </ligand>
</feature>
<feature type="binding site" evidence="3">
    <location>
        <position position="25"/>
    </location>
    <ligand>
        <name>Zn(2+)</name>
        <dbReference type="ChEBI" id="CHEBI:29105"/>
        <label>2</label>
    </ligand>
</feature>
<feature type="binding site" evidence="3">
    <location>
        <position position="28"/>
    </location>
    <ligand>
        <name>Zn(2+)</name>
        <dbReference type="ChEBI" id="CHEBI:29105"/>
        <label>2</label>
    </ligand>
</feature>
<feature type="binding site" evidence="3">
    <location>
        <position position="33"/>
    </location>
    <ligand>
        <name>Zn(2+)</name>
        <dbReference type="ChEBI" id="CHEBI:29105"/>
        <label>1</label>
    </ligand>
</feature>
<feature type="binding site" evidence="3">
    <location>
        <position position="36"/>
    </location>
    <ligand>
        <name>Zn(2+)</name>
        <dbReference type="ChEBI" id="CHEBI:29105"/>
        <label>1</label>
    </ligand>
</feature>
<feature type="binding site" evidence="3">
    <location>
        <position position="42"/>
    </location>
    <ligand>
        <name>Zn(2+)</name>
        <dbReference type="ChEBI" id="CHEBI:29105"/>
        <label>2</label>
    </ligand>
</feature>
<feature type="binding site" evidence="3">
    <location>
        <position position="44"/>
    </location>
    <ligand>
        <name>Zn(2+)</name>
        <dbReference type="ChEBI" id="CHEBI:29105"/>
        <label>2</label>
    </ligand>
</feature>
<feature type="binding site" evidence="3">
    <location>
        <position position="100"/>
    </location>
    <ligand>
        <name>Zn(2+)</name>
        <dbReference type="ChEBI" id="CHEBI:29105"/>
        <label>3</label>
    </ligand>
</feature>
<feature type="binding site" evidence="3">
    <location>
        <position position="105"/>
    </location>
    <ligand>
        <name>Zn(2+)</name>
        <dbReference type="ChEBI" id="CHEBI:29105"/>
        <label>3</label>
    </ligand>
</feature>
<feature type="binding site" evidence="3">
    <location>
        <position position="115"/>
    </location>
    <ligand>
        <name>Zn(2+)</name>
        <dbReference type="ChEBI" id="CHEBI:29105"/>
        <label>4</label>
    </ligand>
</feature>
<feature type="binding site" evidence="3">
    <location>
        <position position="118"/>
    </location>
    <ligand>
        <name>Zn(2+)</name>
        <dbReference type="ChEBI" id="CHEBI:29105"/>
        <label>4</label>
    </ligand>
</feature>
<feature type="binding site" evidence="3">
    <location>
        <position position="123"/>
    </location>
    <ligand>
        <name>Zn(2+)</name>
        <dbReference type="ChEBI" id="CHEBI:29105"/>
        <label>3</label>
    </ligand>
</feature>
<feature type="binding site" evidence="3">
    <location>
        <position position="126"/>
    </location>
    <ligand>
        <name>Zn(2+)</name>
        <dbReference type="ChEBI" id="CHEBI:29105"/>
        <label>3</label>
    </ligand>
</feature>
<feature type="binding site" evidence="3">
    <location>
        <position position="132"/>
    </location>
    <ligand>
        <name>Zn(2+)</name>
        <dbReference type="ChEBI" id="CHEBI:29105"/>
        <label>4</label>
    </ligand>
</feature>
<feature type="binding site" evidence="3">
    <location>
        <position position="134"/>
    </location>
    <ligand>
        <name>Zn(2+)</name>
        <dbReference type="ChEBI" id="CHEBI:29105"/>
        <label>4</label>
    </ligand>
</feature>
<feature type="modified residue" description="Phosphoserine" evidence="1">
    <location>
        <position position="163"/>
    </location>
</feature>
<feature type="modified residue" description="Phosphoserine" evidence="1">
    <location>
        <position position="173"/>
    </location>
</feature>
<feature type="modified residue" description="Cysteine methyl ester" evidence="1">
    <location>
        <position position="254"/>
    </location>
</feature>
<feature type="lipid moiety-binding region" description="S-geranylgeranyl cysteine" evidence="1">
    <location>
        <position position="254"/>
    </location>
</feature>
<feature type="splice variant" id="VSP_018001" description="In isoform 2." evidence="9">
    <location>
        <begin position="177"/>
        <end position="257"/>
    </location>
</feature>
<feature type="strand" evidence="13">
    <location>
        <begin position="116"/>
        <end position="118"/>
    </location>
</feature>
<feature type="helix" evidence="13">
    <location>
        <begin position="124"/>
        <end position="127"/>
    </location>
</feature>
<sequence>MEFPDLGAHCSEPSCQRLDFLPLKCDACSGIFCADHVAYAQHHCGSAYQKDIQVPVCPLCNVPVPVARGEPPDRAVGEHIDRDCRSDPAQQKRKIFTNKCERAGCRQREMMKLTCERCSRNFCIKHRHPLDHDCSGEGHPTSRAGLAAISRAQAVASTSTVPSPSQTMPSCTSPSRATTRSPSWTAPPVIALQNGLSEDEALQRALEMSLAETKPQVPSCQEEEDLALAQALSASEAEYQRQQAQSRSSKPSNCSLC</sequence>
<name>ZFN2B_HUMAN</name>
<organism>
    <name type="scientific">Homo sapiens</name>
    <name type="common">Human</name>
    <dbReference type="NCBI Taxonomy" id="9606"/>
    <lineage>
        <taxon>Eukaryota</taxon>
        <taxon>Metazoa</taxon>
        <taxon>Chordata</taxon>
        <taxon>Craniata</taxon>
        <taxon>Vertebrata</taxon>
        <taxon>Euteleostomi</taxon>
        <taxon>Mammalia</taxon>
        <taxon>Eutheria</taxon>
        <taxon>Euarchontoglires</taxon>
        <taxon>Primates</taxon>
        <taxon>Haplorrhini</taxon>
        <taxon>Catarrhini</taxon>
        <taxon>Hominidae</taxon>
        <taxon>Homo</taxon>
    </lineage>
</organism>
<dbReference type="EMBL" id="AK091345">
    <property type="protein sequence ID" value="BAC03642.1"/>
    <property type="molecule type" value="mRNA"/>
</dbReference>
<dbReference type="EMBL" id="BC018415">
    <property type="protein sequence ID" value="AAH18415.1"/>
    <property type="molecule type" value="mRNA"/>
</dbReference>
<dbReference type="CCDS" id="CCDS2435.1">
    <molecule id="Q8WV99-1"/>
</dbReference>
<dbReference type="RefSeq" id="NP_001257927.1">
    <molecule id="Q8WV99-1"/>
    <property type="nucleotide sequence ID" value="NM_001270998.2"/>
</dbReference>
<dbReference type="RefSeq" id="NP_001257928.1">
    <property type="nucleotide sequence ID" value="NM_001270999.1"/>
</dbReference>
<dbReference type="RefSeq" id="NP_620157.1">
    <molecule id="Q8WV99-1"/>
    <property type="nucleotide sequence ID" value="NM_138802.3"/>
</dbReference>
<dbReference type="RefSeq" id="XP_016858857.1">
    <molecule id="Q8WV99-1"/>
    <property type="nucleotide sequence ID" value="XM_017003368.2"/>
</dbReference>
<dbReference type="RefSeq" id="XP_054196552.1">
    <molecule id="Q8WV99-1"/>
    <property type="nucleotide sequence ID" value="XM_054340577.1"/>
</dbReference>
<dbReference type="PDB" id="1X4V">
    <property type="method" value="NMR"/>
    <property type="chains" value="A=93-142"/>
</dbReference>
<dbReference type="PDBsum" id="1X4V"/>
<dbReference type="SMR" id="Q8WV99"/>
<dbReference type="BioGRID" id="126246">
    <property type="interactions" value="49"/>
</dbReference>
<dbReference type="CORUM" id="Q8WV99"/>
<dbReference type="FunCoup" id="Q8WV99">
    <property type="interactions" value="1368"/>
</dbReference>
<dbReference type="IntAct" id="Q8WV99">
    <property type="interactions" value="31"/>
</dbReference>
<dbReference type="MINT" id="Q8WV99"/>
<dbReference type="STRING" id="9606.ENSP00000289528"/>
<dbReference type="GlyCosmos" id="Q8WV99">
    <property type="glycosylation" value="1 site, 1 glycan"/>
</dbReference>
<dbReference type="GlyGen" id="Q8WV99">
    <property type="glycosylation" value="2 sites, 1 O-linked glycan (2 sites)"/>
</dbReference>
<dbReference type="iPTMnet" id="Q8WV99"/>
<dbReference type="PhosphoSitePlus" id="Q8WV99"/>
<dbReference type="BioMuta" id="ZFAND2B"/>
<dbReference type="DMDM" id="74730823"/>
<dbReference type="jPOST" id="Q8WV99"/>
<dbReference type="MassIVE" id="Q8WV99"/>
<dbReference type="PaxDb" id="9606-ENSP00000289528"/>
<dbReference type="PeptideAtlas" id="Q8WV99"/>
<dbReference type="ProteomicsDB" id="74766">
    <molecule id="Q8WV99-1"/>
</dbReference>
<dbReference type="ProteomicsDB" id="74767">
    <molecule id="Q8WV99-2"/>
</dbReference>
<dbReference type="Pumba" id="Q8WV99"/>
<dbReference type="Antibodypedia" id="51845">
    <property type="antibodies" value="207 antibodies from 15 providers"/>
</dbReference>
<dbReference type="DNASU" id="130617"/>
<dbReference type="Ensembl" id="ENST00000289528.10">
    <molecule id="Q8WV99-1"/>
    <property type="protein sequence ID" value="ENSP00000289528.5"/>
    <property type="gene ID" value="ENSG00000158552.13"/>
</dbReference>
<dbReference type="Ensembl" id="ENST00000409206.5">
    <molecule id="Q8WV99-2"/>
    <property type="protein sequence ID" value="ENSP00000386824.1"/>
    <property type="gene ID" value="ENSG00000158552.13"/>
</dbReference>
<dbReference type="Ensembl" id="ENST00000409336.5">
    <molecule id="Q8WV99-1"/>
    <property type="protein sequence ID" value="ENSP00000386898.1"/>
    <property type="gene ID" value="ENSG00000158552.13"/>
</dbReference>
<dbReference type="Ensembl" id="ENST00000409594.5">
    <molecule id="Q8WV99-2"/>
    <property type="protein sequence ID" value="ENSP00000386399.1"/>
    <property type="gene ID" value="ENSG00000158552.13"/>
</dbReference>
<dbReference type="Ensembl" id="ENST00000444522.6">
    <molecule id="Q8WV99-1"/>
    <property type="protein sequence ID" value="ENSP00000411334.3"/>
    <property type="gene ID" value="ENSG00000158552.13"/>
</dbReference>
<dbReference type="GeneID" id="130617"/>
<dbReference type="KEGG" id="hsa:130617"/>
<dbReference type="MANE-Select" id="ENST00000289528.10">
    <property type="protein sequence ID" value="ENSP00000289528.5"/>
    <property type="RefSeq nucleotide sequence ID" value="NM_138802.3"/>
    <property type="RefSeq protein sequence ID" value="NP_620157.1"/>
</dbReference>
<dbReference type="UCSC" id="uc002vjz.3">
    <molecule id="Q8WV99-1"/>
    <property type="organism name" value="human"/>
</dbReference>
<dbReference type="AGR" id="HGNC:25206"/>
<dbReference type="CTD" id="130617"/>
<dbReference type="DisGeNET" id="130617"/>
<dbReference type="GeneCards" id="ZFAND2B"/>
<dbReference type="HGNC" id="HGNC:25206">
    <property type="gene designation" value="ZFAND2B"/>
</dbReference>
<dbReference type="HPA" id="ENSG00000158552">
    <property type="expression patterns" value="Low tissue specificity"/>
</dbReference>
<dbReference type="MalaCards" id="ZFAND2B"/>
<dbReference type="MIM" id="613474">
    <property type="type" value="gene"/>
</dbReference>
<dbReference type="neXtProt" id="NX_Q8WV99"/>
<dbReference type="OpenTargets" id="ENSG00000158552"/>
<dbReference type="PharmGKB" id="PA142670527"/>
<dbReference type="VEuPathDB" id="HostDB:ENSG00000158552"/>
<dbReference type="eggNOG" id="KOG3183">
    <property type="taxonomic scope" value="Eukaryota"/>
</dbReference>
<dbReference type="GeneTree" id="ENSGT00940000159648"/>
<dbReference type="HOGENOM" id="CLU_061621_2_0_1"/>
<dbReference type="InParanoid" id="Q8WV99"/>
<dbReference type="OMA" id="DKQCKSD"/>
<dbReference type="OrthoDB" id="431929at2759"/>
<dbReference type="PAN-GO" id="Q8WV99">
    <property type="GO annotations" value="4 GO annotations based on evolutionary models"/>
</dbReference>
<dbReference type="PhylomeDB" id="Q8WV99"/>
<dbReference type="TreeFam" id="TF314219"/>
<dbReference type="PathwayCommons" id="Q8WV99"/>
<dbReference type="SignaLink" id="Q8WV99"/>
<dbReference type="BioGRID-ORCS" id="130617">
    <property type="hits" value="13 hits in 1165 CRISPR screens"/>
</dbReference>
<dbReference type="ChiTaRS" id="ZFAND2B">
    <property type="organism name" value="human"/>
</dbReference>
<dbReference type="EvolutionaryTrace" id="Q8WV99"/>
<dbReference type="GenomeRNAi" id="130617"/>
<dbReference type="Pharos" id="Q8WV99">
    <property type="development level" value="Tbio"/>
</dbReference>
<dbReference type="PRO" id="PR:Q8WV99"/>
<dbReference type="Proteomes" id="UP000005640">
    <property type="component" value="Chromosome 2"/>
</dbReference>
<dbReference type="RNAct" id="Q8WV99">
    <property type="molecule type" value="protein"/>
</dbReference>
<dbReference type="Bgee" id="ENSG00000158552">
    <property type="expression patterns" value="Expressed in lower esophagus mucosa and 168 other cell types or tissues"/>
</dbReference>
<dbReference type="ExpressionAtlas" id="Q8WV99">
    <property type="expression patterns" value="baseline and differential"/>
</dbReference>
<dbReference type="GO" id="GO:0005737">
    <property type="term" value="C:cytoplasm"/>
    <property type="evidence" value="ECO:0000318"/>
    <property type="project" value="GO_Central"/>
</dbReference>
<dbReference type="GO" id="GO:0005783">
    <property type="term" value="C:endoplasmic reticulum"/>
    <property type="evidence" value="ECO:0000250"/>
    <property type="project" value="UniProtKB"/>
</dbReference>
<dbReference type="GO" id="GO:0005789">
    <property type="term" value="C:endoplasmic reticulum membrane"/>
    <property type="evidence" value="ECO:0007669"/>
    <property type="project" value="UniProtKB-SubCell"/>
</dbReference>
<dbReference type="GO" id="GO:0016020">
    <property type="term" value="C:membrane"/>
    <property type="evidence" value="ECO:0000250"/>
    <property type="project" value="UniProtKB"/>
</dbReference>
<dbReference type="GO" id="GO:0000502">
    <property type="term" value="C:proteasome complex"/>
    <property type="evidence" value="ECO:0007669"/>
    <property type="project" value="Ensembl"/>
</dbReference>
<dbReference type="GO" id="GO:0036435">
    <property type="term" value="F:K48-linked polyubiquitin modification-dependent protein binding"/>
    <property type="evidence" value="ECO:0000314"/>
    <property type="project" value="UniProtKB"/>
</dbReference>
<dbReference type="GO" id="GO:0043130">
    <property type="term" value="F:ubiquitin binding"/>
    <property type="evidence" value="ECO:0007669"/>
    <property type="project" value="Ensembl"/>
</dbReference>
<dbReference type="GO" id="GO:0008270">
    <property type="term" value="F:zinc ion binding"/>
    <property type="evidence" value="ECO:0007669"/>
    <property type="project" value="UniProtKB-KW"/>
</dbReference>
<dbReference type="GO" id="GO:0043161">
    <property type="term" value="P:proteasome-mediated ubiquitin-dependent protein catabolic process"/>
    <property type="evidence" value="ECO:0000315"/>
    <property type="project" value="UniProtKB"/>
</dbReference>
<dbReference type="GO" id="GO:0045047">
    <property type="term" value="P:protein targeting to ER"/>
    <property type="evidence" value="ECO:0000315"/>
    <property type="project" value="UniProtKB"/>
</dbReference>
<dbReference type="GO" id="GO:0043567">
    <property type="term" value="P:regulation of insulin-like growth factor receptor signaling pathway"/>
    <property type="evidence" value="ECO:0000250"/>
    <property type="project" value="UniProtKB"/>
</dbReference>
<dbReference type="GO" id="GO:0006616">
    <property type="term" value="P:SRP-dependent cotranslational protein targeting to membrane, translocation"/>
    <property type="evidence" value="ECO:0000315"/>
    <property type="project" value="MGI"/>
</dbReference>
<dbReference type="FunFam" id="4.10.1110.10:FF:000003">
    <property type="entry name" value="AN1-type zinc finger protein 2B isoform X1"/>
    <property type="match status" value="1"/>
</dbReference>
<dbReference type="FunFam" id="4.10.1110.10:FF:000004">
    <property type="entry name" value="AN1-type zinc finger protein 2B isoform X1"/>
    <property type="match status" value="1"/>
</dbReference>
<dbReference type="Gene3D" id="4.10.1110.10">
    <property type="entry name" value="AN1-like Zinc finger"/>
    <property type="match status" value="2"/>
</dbReference>
<dbReference type="InterPro" id="IPR035896">
    <property type="entry name" value="AN1-like_Znf"/>
</dbReference>
<dbReference type="InterPro" id="IPR003903">
    <property type="entry name" value="UIM_dom"/>
</dbReference>
<dbReference type="InterPro" id="IPR000058">
    <property type="entry name" value="Znf_AN1"/>
</dbReference>
<dbReference type="PANTHER" id="PTHR14677:SF13">
    <property type="entry name" value="AN1-TYPE ZINC FINGER PROTEIN 2B"/>
    <property type="match status" value="1"/>
</dbReference>
<dbReference type="PANTHER" id="PTHR14677">
    <property type="entry name" value="ARSENITE INDUCUBLE RNA ASSOCIATED PROTEIN AIP-1-RELATED"/>
    <property type="match status" value="1"/>
</dbReference>
<dbReference type="Pfam" id="PF02809">
    <property type="entry name" value="UIM"/>
    <property type="match status" value="2"/>
</dbReference>
<dbReference type="Pfam" id="PF01428">
    <property type="entry name" value="zf-AN1"/>
    <property type="match status" value="2"/>
</dbReference>
<dbReference type="Pfam" id="PF25403">
    <property type="entry name" value="zf-C2H2_ZFAND2"/>
    <property type="match status" value="1"/>
</dbReference>
<dbReference type="SMART" id="SM00726">
    <property type="entry name" value="UIM"/>
    <property type="match status" value="2"/>
</dbReference>
<dbReference type="SMART" id="SM00154">
    <property type="entry name" value="ZnF_AN1"/>
    <property type="match status" value="2"/>
</dbReference>
<dbReference type="SUPFAM" id="SSF118310">
    <property type="entry name" value="AN1-like Zinc finger"/>
    <property type="match status" value="2"/>
</dbReference>
<dbReference type="PROSITE" id="PS50330">
    <property type="entry name" value="UIM"/>
    <property type="match status" value="2"/>
</dbReference>
<dbReference type="PROSITE" id="PS51039">
    <property type="entry name" value="ZF_AN1"/>
    <property type="match status" value="2"/>
</dbReference>
<reference key="1">
    <citation type="journal article" date="2004" name="Nat. Genet.">
        <title>Complete sequencing and characterization of 21,243 full-length human cDNAs.</title>
        <authorList>
            <person name="Ota T."/>
            <person name="Suzuki Y."/>
            <person name="Nishikawa T."/>
            <person name="Otsuki T."/>
            <person name="Sugiyama T."/>
            <person name="Irie R."/>
            <person name="Wakamatsu A."/>
            <person name="Hayashi K."/>
            <person name="Sato H."/>
            <person name="Nagai K."/>
            <person name="Kimura K."/>
            <person name="Makita H."/>
            <person name="Sekine M."/>
            <person name="Obayashi M."/>
            <person name="Nishi T."/>
            <person name="Shibahara T."/>
            <person name="Tanaka T."/>
            <person name="Ishii S."/>
            <person name="Yamamoto J."/>
            <person name="Saito K."/>
            <person name="Kawai Y."/>
            <person name="Isono Y."/>
            <person name="Nakamura Y."/>
            <person name="Nagahari K."/>
            <person name="Murakami K."/>
            <person name="Yasuda T."/>
            <person name="Iwayanagi T."/>
            <person name="Wagatsuma M."/>
            <person name="Shiratori A."/>
            <person name="Sudo H."/>
            <person name="Hosoiri T."/>
            <person name="Kaku Y."/>
            <person name="Kodaira H."/>
            <person name="Kondo H."/>
            <person name="Sugawara M."/>
            <person name="Takahashi M."/>
            <person name="Kanda K."/>
            <person name="Yokoi T."/>
            <person name="Furuya T."/>
            <person name="Kikkawa E."/>
            <person name="Omura Y."/>
            <person name="Abe K."/>
            <person name="Kamihara K."/>
            <person name="Katsuta N."/>
            <person name="Sato K."/>
            <person name="Tanikawa M."/>
            <person name="Yamazaki M."/>
            <person name="Ninomiya K."/>
            <person name="Ishibashi T."/>
            <person name="Yamashita H."/>
            <person name="Murakawa K."/>
            <person name="Fujimori K."/>
            <person name="Tanai H."/>
            <person name="Kimata M."/>
            <person name="Watanabe M."/>
            <person name="Hiraoka S."/>
            <person name="Chiba Y."/>
            <person name="Ishida S."/>
            <person name="Ono Y."/>
            <person name="Takiguchi S."/>
            <person name="Watanabe S."/>
            <person name="Yosida M."/>
            <person name="Hotuta T."/>
            <person name="Kusano J."/>
            <person name="Kanehori K."/>
            <person name="Takahashi-Fujii A."/>
            <person name="Hara H."/>
            <person name="Tanase T.-O."/>
            <person name="Nomura Y."/>
            <person name="Togiya S."/>
            <person name="Komai F."/>
            <person name="Hara R."/>
            <person name="Takeuchi K."/>
            <person name="Arita M."/>
            <person name="Imose N."/>
            <person name="Musashino K."/>
            <person name="Yuuki H."/>
            <person name="Oshima A."/>
            <person name="Sasaki N."/>
            <person name="Aotsuka S."/>
            <person name="Yoshikawa Y."/>
            <person name="Matsunawa H."/>
            <person name="Ichihara T."/>
            <person name="Shiohata N."/>
            <person name="Sano S."/>
            <person name="Moriya S."/>
            <person name="Momiyama H."/>
            <person name="Satoh N."/>
            <person name="Takami S."/>
            <person name="Terashima Y."/>
            <person name="Suzuki O."/>
            <person name="Nakagawa S."/>
            <person name="Senoh A."/>
            <person name="Mizoguchi H."/>
            <person name="Goto Y."/>
            <person name="Shimizu F."/>
            <person name="Wakebe H."/>
            <person name="Hishigaki H."/>
            <person name="Watanabe T."/>
            <person name="Sugiyama A."/>
            <person name="Takemoto M."/>
            <person name="Kawakami B."/>
            <person name="Yamazaki M."/>
            <person name="Watanabe K."/>
            <person name="Kumagai A."/>
            <person name="Itakura S."/>
            <person name="Fukuzumi Y."/>
            <person name="Fujimori Y."/>
            <person name="Komiyama M."/>
            <person name="Tashiro H."/>
            <person name="Tanigami A."/>
            <person name="Fujiwara T."/>
            <person name="Ono T."/>
            <person name="Yamada K."/>
            <person name="Fujii Y."/>
            <person name="Ozaki K."/>
            <person name="Hirao M."/>
            <person name="Ohmori Y."/>
            <person name="Kawabata A."/>
            <person name="Hikiji T."/>
            <person name="Kobatake N."/>
            <person name="Inagaki H."/>
            <person name="Ikema Y."/>
            <person name="Okamoto S."/>
            <person name="Okitani R."/>
            <person name="Kawakami T."/>
            <person name="Noguchi S."/>
            <person name="Itoh T."/>
            <person name="Shigeta K."/>
            <person name="Senba T."/>
            <person name="Matsumura K."/>
            <person name="Nakajima Y."/>
            <person name="Mizuno T."/>
            <person name="Morinaga M."/>
            <person name="Sasaki M."/>
            <person name="Togashi T."/>
            <person name="Oyama M."/>
            <person name="Hata H."/>
            <person name="Watanabe M."/>
            <person name="Komatsu T."/>
            <person name="Mizushima-Sugano J."/>
            <person name="Satoh T."/>
            <person name="Shirai Y."/>
            <person name="Takahashi Y."/>
            <person name="Nakagawa K."/>
            <person name="Okumura K."/>
            <person name="Nagase T."/>
            <person name="Nomura N."/>
            <person name="Kikuchi H."/>
            <person name="Masuho Y."/>
            <person name="Yamashita R."/>
            <person name="Nakai K."/>
            <person name="Yada T."/>
            <person name="Nakamura Y."/>
            <person name="Ohara O."/>
            <person name="Isogai T."/>
            <person name="Sugano S."/>
        </authorList>
    </citation>
    <scope>NUCLEOTIDE SEQUENCE [LARGE SCALE MRNA] (ISOFORM 2)</scope>
    <source>
        <tissue>Brain</tissue>
    </source>
</reference>
<reference key="2">
    <citation type="journal article" date="2004" name="Genome Res.">
        <title>The status, quality, and expansion of the NIH full-length cDNA project: the Mammalian Gene Collection (MGC).</title>
        <authorList>
            <consortium name="The MGC Project Team"/>
        </authorList>
    </citation>
    <scope>NUCLEOTIDE SEQUENCE [LARGE SCALE MRNA] (ISOFORM 1)</scope>
    <source>
        <tissue>Ovary</tissue>
    </source>
</reference>
<reference key="3">
    <citation type="journal article" date="2009" name="Sci. Signal.">
        <title>Quantitative phosphoproteomic analysis of T cell receptor signaling reveals system-wide modulation of protein-protein interactions.</title>
        <authorList>
            <person name="Mayya V."/>
            <person name="Lundgren D.H."/>
            <person name="Hwang S.-I."/>
            <person name="Rezaul K."/>
            <person name="Wu L."/>
            <person name="Eng J.K."/>
            <person name="Rodionov V."/>
            <person name="Han D.K."/>
        </authorList>
    </citation>
    <scope>IDENTIFICATION BY MASS SPECTROMETRY [LARGE SCALE ANALYSIS]</scope>
    <source>
        <tissue>Leukemic T-cell</tissue>
    </source>
</reference>
<reference key="4">
    <citation type="journal article" date="2011" name="J. Biol. Chem.">
        <title>The general definition of the p97/valosin-containing protein (VCP)-interacting motif (VIM) delineates a new family of p97 cofactors.</title>
        <authorList>
            <person name="Stapf C."/>
            <person name="Cartwright E."/>
            <person name="Bycroft M."/>
            <person name="Hofmann K."/>
            <person name="Buchberger A."/>
        </authorList>
    </citation>
    <scope>INTERACTION WITH VCP</scope>
    <scope>VIM MOTIF</scope>
</reference>
<reference key="5">
    <citation type="journal article" date="2014" name="Biochem. J.">
        <title>Signal-peptide-mediated translocation is regulated by a p97-AIRAPL complex.</title>
        <authorList>
            <person name="Glinka T."/>
            <person name="Alter J."/>
            <person name="Braunstein I."/>
            <person name="Tzach L."/>
            <person name="Wei Sheng C."/>
            <person name="Geifman S."/>
            <person name="Edelmann M.J."/>
            <person name="Kessler B.M."/>
            <person name="Stanhill A."/>
        </authorList>
    </citation>
    <scope>UBIQUITIN-BINDING</scope>
    <scope>INTERACTION WITH BAG6; DERL1; FAF2; NPLOC4; UFD1 AND VCP</scope>
</reference>
<reference key="6">
    <citation type="journal article" date="2015" name="Mol. Biol. Cell">
        <title>Proteasomal degradation of preemptive quality control (pQC) substrates is mediated by an AIRAPL-p97 complex.</title>
        <authorList>
            <person name="Braunstein I."/>
            <person name="Zach L."/>
            <person name="Allan S."/>
            <person name="Kalies K.U."/>
            <person name="Stanhill A."/>
        </authorList>
    </citation>
    <scope>INTERACTION WITH BAG6 AND VCP</scope>
</reference>
<reference key="7">
    <citation type="journal article" date="2016" name="Nat. Med.">
        <title>Loss of the proteostasis factor AIRAPL causes myeloid transformation by deregulating IGF-1 signaling.</title>
        <authorList>
            <person name="Osorio F.G."/>
            <person name="Soria-Valles C."/>
            <person name="Santiago-Fernandez O."/>
            <person name="Bernal T."/>
            <person name="Mittelbrunn M."/>
            <person name="Colado E."/>
            <person name="Rodriguez F."/>
            <person name="Bonzon-Kulichenko E."/>
            <person name="Vazquez J."/>
            <person name="Porta-de-la-Riva M."/>
            <person name="Ceron J."/>
            <person name="Fueyo A."/>
            <person name="Li J."/>
            <person name="Green A.R."/>
            <person name="Freije J.M."/>
            <person name="Lopez-Otin C."/>
        </authorList>
    </citation>
    <scope>FUNCTION</scope>
    <scope>INTERACTION WITH IGF1R</scope>
    <scope>INDUCTION</scope>
</reference>
<reference key="8">
    <citation type="submission" date="2005-11" db="PDB data bank">
        <title>Solution structure of the ZF-AN1 domain from human hypothetical protein LOC130617.</title>
        <authorList>
            <consortium name="RIKEN structural genomics initiative (RSGI)"/>
        </authorList>
    </citation>
    <scope>STRUCTURE BY NMR OF 93-142 IN COMPLEX WITH ZINC IONS</scope>
</reference>
<gene>
    <name evidence="12" type="primary">ZFAND2B</name>
    <name evidence="10" type="synonym">AIRAPL</name>
</gene>
<keyword id="KW-0002">3D-structure</keyword>
<keyword id="KW-0025">Alternative splicing</keyword>
<keyword id="KW-0256">Endoplasmic reticulum</keyword>
<keyword id="KW-0449">Lipoprotein</keyword>
<keyword id="KW-0472">Membrane</keyword>
<keyword id="KW-0479">Metal-binding</keyword>
<keyword id="KW-0488">Methylation</keyword>
<keyword id="KW-0597">Phosphoprotein</keyword>
<keyword id="KW-0636">Prenylation</keyword>
<keyword id="KW-1267">Proteomics identification</keyword>
<keyword id="KW-1185">Reference proteome</keyword>
<keyword id="KW-0677">Repeat</keyword>
<keyword id="KW-0862">Zinc</keyword>
<keyword id="KW-0863">Zinc-finger</keyword>
<accession>Q8WV99</accession>
<accession>Q8NB98</accession>
<proteinExistence type="evidence at protein level"/>
<evidence type="ECO:0000250" key="1">
    <source>
        <dbReference type="UniProtKB" id="Q91X58"/>
    </source>
</evidence>
<evidence type="ECO:0000255" key="2">
    <source>
        <dbReference type="PROSITE-ProRule" id="PRU00213"/>
    </source>
</evidence>
<evidence type="ECO:0000255" key="3">
    <source>
        <dbReference type="PROSITE-ProRule" id="PRU00449"/>
    </source>
</evidence>
<evidence type="ECO:0000256" key="4">
    <source>
        <dbReference type="SAM" id="MobiDB-lite"/>
    </source>
</evidence>
<evidence type="ECO:0000269" key="5">
    <source>
    </source>
</evidence>
<evidence type="ECO:0000269" key="6">
    <source>
    </source>
</evidence>
<evidence type="ECO:0000269" key="7">
    <source>
    </source>
</evidence>
<evidence type="ECO:0000269" key="8">
    <source>
    </source>
</evidence>
<evidence type="ECO:0000303" key="9">
    <source>
    </source>
</evidence>
<evidence type="ECO:0000303" key="10">
    <source>
    </source>
</evidence>
<evidence type="ECO:0000305" key="11"/>
<evidence type="ECO:0000312" key="12">
    <source>
        <dbReference type="HGNC" id="HGNC:25206"/>
    </source>
</evidence>
<evidence type="ECO:0007829" key="13">
    <source>
        <dbReference type="PDB" id="1X4V"/>
    </source>
</evidence>